<proteinExistence type="inferred from homology"/>
<evidence type="ECO:0000255" key="1">
    <source>
        <dbReference type="HAMAP-Rule" id="MF_01398"/>
    </source>
</evidence>
<keyword id="KW-0066">ATP synthesis</keyword>
<keyword id="KW-0997">Cell inner membrane</keyword>
<keyword id="KW-1003">Cell membrane</keyword>
<keyword id="KW-0138">CF(0)</keyword>
<keyword id="KW-0375">Hydrogen ion transport</keyword>
<keyword id="KW-0406">Ion transport</keyword>
<keyword id="KW-0472">Membrane</keyword>
<keyword id="KW-1185">Reference proteome</keyword>
<keyword id="KW-0812">Transmembrane</keyword>
<keyword id="KW-1133">Transmembrane helix</keyword>
<keyword id="KW-0813">Transport</keyword>
<reference key="1">
    <citation type="journal article" date="2010" name="PLoS ONE">
        <title>Genome sequence of Cronobacter sakazakii BAA-894 and comparative genomic hybridization analysis with other Cronobacter species.</title>
        <authorList>
            <person name="Kucerova E."/>
            <person name="Clifton S.W."/>
            <person name="Xia X.Q."/>
            <person name="Long F."/>
            <person name="Porwollik S."/>
            <person name="Fulton L."/>
            <person name="Fronick C."/>
            <person name="Minx P."/>
            <person name="Kyung K."/>
            <person name="Warren W."/>
            <person name="Fulton R."/>
            <person name="Feng D."/>
            <person name="Wollam A."/>
            <person name="Shah N."/>
            <person name="Bhonagiri V."/>
            <person name="Nash W.E."/>
            <person name="Hallsworth-Pepin K."/>
            <person name="Wilson R.K."/>
            <person name="McClelland M."/>
            <person name="Forsythe S.J."/>
        </authorList>
    </citation>
    <scope>NUCLEOTIDE SEQUENCE [LARGE SCALE GENOMIC DNA]</scope>
    <source>
        <strain>ATCC BAA-894</strain>
    </source>
</reference>
<feature type="chain" id="PRO_0000368467" description="ATP synthase subunit b">
    <location>
        <begin position="1"/>
        <end position="156"/>
    </location>
</feature>
<feature type="transmembrane region" description="Helical" evidence="1">
    <location>
        <begin position="11"/>
        <end position="31"/>
    </location>
</feature>
<organism>
    <name type="scientific">Cronobacter sakazakii (strain ATCC BAA-894)</name>
    <name type="common">Enterobacter sakazakii</name>
    <dbReference type="NCBI Taxonomy" id="290339"/>
    <lineage>
        <taxon>Bacteria</taxon>
        <taxon>Pseudomonadati</taxon>
        <taxon>Pseudomonadota</taxon>
        <taxon>Gammaproteobacteria</taxon>
        <taxon>Enterobacterales</taxon>
        <taxon>Enterobacteriaceae</taxon>
        <taxon>Cronobacter</taxon>
    </lineage>
</organism>
<comment type="function">
    <text evidence="1">F(1)F(0) ATP synthase produces ATP from ADP in the presence of a proton or sodium gradient. F-type ATPases consist of two structural domains, F(1) containing the extramembraneous catalytic core and F(0) containing the membrane proton channel, linked together by a central stalk and a peripheral stalk. During catalysis, ATP synthesis in the catalytic domain of F(1) is coupled via a rotary mechanism of the central stalk subunits to proton translocation.</text>
</comment>
<comment type="function">
    <text evidence="1">Component of the F(0) channel, it forms part of the peripheral stalk, linking F(1) to F(0).</text>
</comment>
<comment type="subunit">
    <text evidence="1">F-type ATPases have 2 components, F(1) - the catalytic core - and F(0) - the membrane proton channel. F(1) has five subunits: alpha(3), beta(3), gamma(1), delta(1), epsilon(1). F(0) has three main subunits: a(1), b(2) and c(10-14). The alpha and beta chains form an alternating ring which encloses part of the gamma chain. F(1) is attached to F(0) by a central stalk formed by the gamma and epsilon chains, while a peripheral stalk is formed by the delta and b chains.</text>
</comment>
<comment type="subcellular location">
    <subcellularLocation>
        <location evidence="1">Cell inner membrane</location>
        <topology evidence="1">Single-pass membrane protein</topology>
    </subcellularLocation>
</comment>
<comment type="similarity">
    <text evidence="1">Belongs to the ATPase B chain family.</text>
</comment>
<name>ATPF_CROS8</name>
<accession>A7MMX3</accession>
<dbReference type="EMBL" id="CP000783">
    <property type="protein sequence ID" value="ABU79196.1"/>
    <property type="molecule type" value="Genomic_DNA"/>
</dbReference>
<dbReference type="RefSeq" id="WP_004386171.1">
    <property type="nucleotide sequence ID" value="NC_009778.1"/>
</dbReference>
<dbReference type="SMR" id="A7MMX3"/>
<dbReference type="GeneID" id="92808394"/>
<dbReference type="KEGG" id="esa:ESA_04010"/>
<dbReference type="HOGENOM" id="CLU_079215_4_5_6"/>
<dbReference type="Proteomes" id="UP000000260">
    <property type="component" value="Chromosome"/>
</dbReference>
<dbReference type="GO" id="GO:0005886">
    <property type="term" value="C:plasma membrane"/>
    <property type="evidence" value="ECO:0007669"/>
    <property type="project" value="UniProtKB-SubCell"/>
</dbReference>
<dbReference type="GO" id="GO:0045259">
    <property type="term" value="C:proton-transporting ATP synthase complex"/>
    <property type="evidence" value="ECO:0007669"/>
    <property type="project" value="UniProtKB-KW"/>
</dbReference>
<dbReference type="GO" id="GO:0046933">
    <property type="term" value="F:proton-transporting ATP synthase activity, rotational mechanism"/>
    <property type="evidence" value="ECO:0007669"/>
    <property type="project" value="UniProtKB-UniRule"/>
</dbReference>
<dbReference type="GO" id="GO:0046961">
    <property type="term" value="F:proton-transporting ATPase activity, rotational mechanism"/>
    <property type="evidence" value="ECO:0007669"/>
    <property type="project" value="TreeGrafter"/>
</dbReference>
<dbReference type="CDD" id="cd06503">
    <property type="entry name" value="ATP-synt_Fo_b"/>
    <property type="match status" value="1"/>
</dbReference>
<dbReference type="Gene3D" id="6.10.250.1580">
    <property type="match status" value="1"/>
</dbReference>
<dbReference type="HAMAP" id="MF_01398">
    <property type="entry name" value="ATP_synth_b_bprime"/>
    <property type="match status" value="1"/>
</dbReference>
<dbReference type="InterPro" id="IPR028987">
    <property type="entry name" value="ATP_synth_B-like_membr_sf"/>
</dbReference>
<dbReference type="InterPro" id="IPR002146">
    <property type="entry name" value="ATP_synth_b/b'su_bac/chlpt"/>
</dbReference>
<dbReference type="InterPro" id="IPR005864">
    <property type="entry name" value="ATP_synth_F0_bsu_bac"/>
</dbReference>
<dbReference type="InterPro" id="IPR050059">
    <property type="entry name" value="ATP_synthase_B_chain"/>
</dbReference>
<dbReference type="NCBIfam" id="TIGR01144">
    <property type="entry name" value="ATP_synt_b"/>
    <property type="match status" value="1"/>
</dbReference>
<dbReference type="NCBIfam" id="NF004411">
    <property type="entry name" value="PRK05759.1-2"/>
    <property type="match status" value="1"/>
</dbReference>
<dbReference type="NCBIfam" id="NF004413">
    <property type="entry name" value="PRK05759.1-4"/>
    <property type="match status" value="1"/>
</dbReference>
<dbReference type="PANTHER" id="PTHR33445:SF1">
    <property type="entry name" value="ATP SYNTHASE SUBUNIT B"/>
    <property type="match status" value="1"/>
</dbReference>
<dbReference type="PANTHER" id="PTHR33445">
    <property type="entry name" value="ATP SYNTHASE SUBUNIT B', CHLOROPLASTIC"/>
    <property type="match status" value="1"/>
</dbReference>
<dbReference type="Pfam" id="PF00430">
    <property type="entry name" value="ATP-synt_B"/>
    <property type="match status" value="1"/>
</dbReference>
<dbReference type="SUPFAM" id="SSF81573">
    <property type="entry name" value="F1F0 ATP synthase subunit B, membrane domain"/>
    <property type="match status" value="1"/>
</dbReference>
<protein>
    <recommendedName>
        <fullName evidence="1">ATP synthase subunit b</fullName>
    </recommendedName>
    <alternativeName>
        <fullName evidence="1">ATP synthase F(0) sector subunit b</fullName>
    </alternativeName>
    <alternativeName>
        <fullName evidence="1">ATPase subunit I</fullName>
    </alternativeName>
    <alternativeName>
        <fullName evidence="1">F-type ATPase subunit b</fullName>
        <shortName evidence="1">F-ATPase subunit b</shortName>
    </alternativeName>
</protein>
<sequence>MNLNATILGQAIAFVLFVLFCMKYVWPPIMAAIEKRQKEIADGLSSAERAKKDLELAQSNATDQLKKAKAEAQVIIEQANKRRAQILDEAKAEAEQERNKIVAQAQAEIEAERKRAREELRKQVAILAVAGAEKIIERSVDEAANSDIVNKLVAEL</sequence>
<gene>
    <name evidence="1" type="primary">atpF</name>
    <name type="ordered locus">ESA_04010</name>
</gene>